<gene>
    <name evidence="1" type="primary">mtnA</name>
    <name type="ordered locus">YPDSF_2879</name>
</gene>
<evidence type="ECO:0000255" key="1">
    <source>
        <dbReference type="HAMAP-Rule" id="MF_01678"/>
    </source>
</evidence>
<evidence type="ECO:0000305" key="2"/>
<reference key="1">
    <citation type="submission" date="2007-02" db="EMBL/GenBank/DDBJ databases">
        <title>Complete sequence of chromosome of Yersinia pestis Pestoides F.</title>
        <authorList>
            <consortium name="US DOE Joint Genome Institute"/>
            <person name="Copeland A."/>
            <person name="Lucas S."/>
            <person name="Lapidus A."/>
            <person name="Barry K."/>
            <person name="Detter J.C."/>
            <person name="Glavina del Rio T."/>
            <person name="Hammon N."/>
            <person name="Israni S."/>
            <person name="Dalin E."/>
            <person name="Tice H."/>
            <person name="Pitluck S."/>
            <person name="Di Bartolo G."/>
            <person name="Chain P."/>
            <person name="Malfatti S."/>
            <person name="Shin M."/>
            <person name="Vergez L."/>
            <person name="Schmutz J."/>
            <person name="Larimer F."/>
            <person name="Land M."/>
            <person name="Hauser L."/>
            <person name="Worsham P."/>
            <person name="Chu M."/>
            <person name="Bearden S."/>
            <person name="Garcia E."/>
            <person name="Richardson P."/>
        </authorList>
    </citation>
    <scope>NUCLEOTIDE SEQUENCE [LARGE SCALE GENOMIC DNA]</scope>
    <source>
        <strain>Pestoides F</strain>
    </source>
</reference>
<accession>A4TPM9</accession>
<feature type="chain" id="PRO_0000357278" description="Methylthioribose-1-phosphate isomerase">
    <location>
        <begin position="1"/>
        <end position="346"/>
    </location>
</feature>
<feature type="active site" description="Proton donor" evidence="1">
    <location>
        <position position="233"/>
    </location>
</feature>
<feature type="binding site" evidence="1">
    <location>
        <begin position="54"/>
        <end position="56"/>
    </location>
    <ligand>
        <name>substrate</name>
    </ligand>
</feature>
<feature type="binding site" evidence="1">
    <location>
        <position position="91"/>
    </location>
    <ligand>
        <name>substrate</name>
    </ligand>
</feature>
<feature type="binding site" evidence="1">
    <location>
        <position position="192"/>
    </location>
    <ligand>
        <name>substrate</name>
    </ligand>
</feature>
<feature type="binding site" evidence="1">
    <location>
        <begin position="243"/>
        <end position="244"/>
    </location>
    <ligand>
        <name>substrate</name>
    </ligand>
</feature>
<feature type="site" description="Transition state stabilizer" evidence="1">
    <location>
        <position position="153"/>
    </location>
</feature>
<name>MTNA_YERPP</name>
<comment type="function">
    <text evidence="1">Catalyzes the interconversion of methylthioribose-1-phosphate (MTR-1-P) into methylthioribulose-1-phosphate (MTRu-1-P).</text>
</comment>
<comment type="catalytic activity">
    <reaction evidence="1">
        <text>5-(methylsulfanyl)-alpha-D-ribose 1-phosphate = 5-(methylsulfanyl)-D-ribulose 1-phosphate</text>
        <dbReference type="Rhea" id="RHEA:19989"/>
        <dbReference type="ChEBI" id="CHEBI:58533"/>
        <dbReference type="ChEBI" id="CHEBI:58548"/>
        <dbReference type="EC" id="5.3.1.23"/>
    </reaction>
</comment>
<comment type="pathway">
    <text evidence="1">Amino-acid biosynthesis; L-methionine biosynthesis via salvage pathway; L-methionine from S-methyl-5-thio-alpha-D-ribose 1-phosphate: step 1/6.</text>
</comment>
<comment type="similarity">
    <text evidence="2">Belongs to the eIF-2B alpha/beta/delta subunits family. MtnA subfamily.</text>
</comment>
<organism>
    <name type="scientific">Yersinia pestis (strain Pestoides F)</name>
    <dbReference type="NCBI Taxonomy" id="386656"/>
    <lineage>
        <taxon>Bacteria</taxon>
        <taxon>Pseudomonadati</taxon>
        <taxon>Pseudomonadota</taxon>
        <taxon>Gammaproteobacteria</taxon>
        <taxon>Enterobacterales</taxon>
        <taxon>Yersiniaceae</taxon>
        <taxon>Yersinia</taxon>
    </lineage>
</organism>
<keyword id="KW-0028">Amino-acid biosynthesis</keyword>
<keyword id="KW-0413">Isomerase</keyword>
<keyword id="KW-0486">Methionine biosynthesis</keyword>
<proteinExistence type="inferred from homology"/>
<protein>
    <recommendedName>
        <fullName evidence="1">Methylthioribose-1-phosphate isomerase</fullName>
        <shortName evidence="1">M1Pi</shortName>
        <shortName evidence="1">MTR-1-P isomerase</shortName>
        <ecNumber evidence="1">5.3.1.23</ecNumber>
    </recommendedName>
    <alternativeName>
        <fullName evidence="1">S-methyl-5-thioribose-1-phosphate isomerase</fullName>
    </alternativeName>
</protein>
<sequence>MQTLNTLDLQTTSLKIVNGQLWILDQQALPQRQEWLLADTVASLIEHIQALRVRGAPLIGLSASLLLALLAERGLSQALLEQALIALRESRPTAVNLMNNLARMQQALLQPNWVTAMAAEALRLVDEDRELCERIAQHGAALVKPGSNLLTHCNTGGLATAGIGTAIGVLLRAHQQGNLRQVWVDETRPLLQGGRLTAWELGELGIPYQLICDSMAASLMAQGQVDAIWVGADRIAANGDVANKIGTYSLAVLAHYHRIPFYVAAPHTTHDPDCPDGAAIPIEQRAASEVTGVSGGFGHCQWAPEDAAVYNPAFDVTPAALISGWVLDSGVITPEQVAAGFFQPHR</sequence>
<dbReference type="EC" id="5.3.1.23" evidence="1"/>
<dbReference type="EMBL" id="CP000668">
    <property type="protein sequence ID" value="ABP41241.1"/>
    <property type="molecule type" value="Genomic_DNA"/>
</dbReference>
<dbReference type="RefSeq" id="WP_011906391.1">
    <property type="nucleotide sequence ID" value="NZ_CP009715.1"/>
</dbReference>
<dbReference type="SMR" id="A4TPM9"/>
<dbReference type="KEGG" id="ypp:YPDSF_2879"/>
<dbReference type="PATRIC" id="fig|386656.14.peg.143"/>
<dbReference type="UniPathway" id="UPA00904">
    <property type="reaction ID" value="UER00874"/>
</dbReference>
<dbReference type="GO" id="GO:0046523">
    <property type="term" value="F:S-methyl-5-thioribose-1-phosphate isomerase activity"/>
    <property type="evidence" value="ECO:0007669"/>
    <property type="project" value="UniProtKB-UniRule"/>
</dbReference>
<dbReference type="GO" id="GO:0019509">
    <property type="term" value="P:L-methionine salvage from methylthioadenosine"/>
    <property type="evidence" value="ECO:0007669"/>
    <property type="project" value="UniProtKB-UniRule"/>
</dbReference>
<dbReference type="FunFam" id="3.40.50.10470:FF:000006">
    <property type="entry name" value="Methylthioribose-1-phosphate isomerase"/>
    <property type="match status" value="1"/>
</dbReference>
<dbReference type="Gene3D" id="1.20.120.420">
    <property type="entry name" value="translation initiation factor eif-2b, domain 1"/>
    <property type="match status" value="1"/>
</dbReference>
<dbReference type="Gene3D" id="3.40.50.10470">
    <property type="entry name" value="Translation initiation factor eif-2b, domain 2"/>
    <property type="match status" value="1"/>
</dbReference>
<dbReference type="HAMAP" id="MF_01678">
    <property type="entry name" value="Salvage_MtnA"/>
    <property type="match status" value="1"/>
</dbReference>
<dbReference type="InterPro" id="IPR000649">
    <property type="entry name" value="IF-2B-related"/>
</dbReference>
<dbReference type="InterPro" id="IPR005251">
    <property type="entry name" value="IF-M1Pi"/>
</dbReference>
<dbReference type="InterPro" id="IPR042529">
    <property type="entry name" value="IF_2B-like_C"/>
</dbReference>
<dbReference type="InterPro" id="IPR011559">
    <property type="entry name" value="Initiation_fac_2B_a/b/d"/>
</dbReference>
<dbReference type="InterPro" id="IPR027363">
    <property type="entry name" value="M1Pi_N"/>
</dbReference>
<dbReference type="InterPro" id="IPR037171">
    <property type="entry name" value="NagB/RpiA_transferase-like"/>
</dbReference>
<dbReference type="NCBIfam" id="TIGR00524">
    <property type="entry name" value="eIF-2B_rel"/>
    <property type="match status" value="1"/>
</dbReference>
<dbReference type="NCBIfam" id="NF004326">
    <property type="entry name" value="PRK05720.1"/>
    <property type="match status" value="1"/>
</dbReference>
<dbReference type="NCBIfam" id="TIGR00512">
    <property type="entry name" value="salvage_mtnA"/>
    <property type="match status" value="1"/>
</dbReference>
<dbReference type="PANTHER" id="PTHR43475">
    <property type="entry name" value="METHYLTHIORIBOSE-1-PHOSPHATE ISOMERASE"/>
    <property type="match status" value="1"/>
</dbReference>
<dbReference type="PANTHER" id="PTHR43475:SF1">
    <property type="entry name" value="METHYLTHIORIBOSE-1-PHOSPHATE ISOMERASE"/>
    <property type="match status" value="1"/>
</dbReference>
<dbReference type="Pfam" id="PF01008">
    <property type="entry name" value="IF-2B"/>
    <property type="match status" value="1"/>
</dbReference>
<dbReference type="SUPFAM" id="SSF100950">
    <property type="entry name" value="NagB/RpiA/CoA transferase-like"/>
    <property type="match status" value="1"/>
</dbReference>